<evidence type="ECO:0000255" key="1"/>
<evidence type="ECO:0000255" key="2">
    <source>
        <dbReference type="PROSITE-ProRule" id="PRU01240"/>
    </source>
</evidence>
<evidence type="ECO:0000269" key="3">
    <source>
    </source>
</evidence>
<evidence type="ECO:0000305" key="4"/>
<dbReference type="EC" id="3.4.21.-"/>
<dbReference type="EMBL" id="AL391737">
    <property type="protein sequence ID" value="CAD24986.1"/>
    <property type="molecule type" value="Genomic_DNA"/>
</dbReference>
<dbReference type="RefSeq" id="XP_965951.1">
    <property type="nucleotide sequence ID" value="XM_960858.1"/>
</dbReference>
<dbReference type="SMR" id="Q8SQJ3"/>
<dbReference type="FunCoup" id="Q8SQJ3">
    <property type="interactions" value="9"/>
</dbReference>
<dbReference type="STRING" id="284813.Q8SQJ3"/>
<dbReference type="MEROPS" id="S08.032"/>
<dbReference type="VEuPathDB" id="MicrosporidiaDB:ECU01_1130"/>
<dbReference type="HOGENOM" id="CLU_011263_1_6_1"/>
<dbReference type="InParanoid" id="Q8SQJ3"/>
<dbReference type="OMA" id="NEHEDAC"/>
<dbReference type="OrthoDB" id="206201at2759"/>
<dbReference type="Proteomes" id="UP000000819">
    <property type="component" value="Chromosome I"/>
</dbReference>
<dbReference type="GO" id="GO:0005615">
    <property type="term" value="C:extracellular space"/>
    <property type="evidence" value="ECO:0007669"/>
    <property type="project" value="TreeGrafter"/>
</dbReference>
<dbReference type="GO" id="GO:0004252">
    <property type="term" value="F:serine-type endopeptidase activity"/>
    <property type="evidence" value="ECO:0007669"/>
    <property type="project" value="InterPro"/>
</dbReference>
<dbReference type="GO" id="GO:0006508">
    <property type="term" value="P:proteolysis"/>
    <property type="evidence" value="ECO:0007669"/>
    <property type="project" value="UniProtKB-KW"/>
</dbReference>
<dbReference type="GO" id="GO:0030435">
    <property type="term" value="P:sporulation resulting in formation of a cellular spore"/>
    <property type="evidence" value="ECO:0007669"/>
    <property type="project" value="UniProtKB-KW"/>
</dbReference>
<dbReference type="CDD" id="cd04077">
    <property type="entry name" value="Peptidases_S8_PCSK9_ProteinaseK_like"/>
    <property type="match status" value="1"/>
</dbReference>
<dbReference type="Gene3D" id="3.40.50.200">
    <property type="entry name" value="Peptidase S8/S53 domain"/>
    <property type="match status" value="1"/>
</dbReference>
<dbReference type="InterPro" id="IPR034193">
    <property type="entry name" value="PCSK9_ProteinaseK-like"/>
</dbReference>
<dbReference type="InterPro" id="IPR000209">
    <property type="entry name" value="Peptidase_S8/S53_dom"/>
</dbReference>
<dbReference type="InterPro" id="IPR036852">
    <property type="entry name" value="Peptidase_S8/S53_dom_sf"/>
</dbReference>
<dbReference type="InterPro" id="IPR023827">
    <property type="entry name" value="Peptidase_S8_Asp-AS"/>
</dbReference>
<dbReference type="InterPro" id="IPR022398">
    <property type="entry name" value="Peptidase_S8_His-AS"/>
</dbReference>
<dbReference type="InterPro" id="IPR023828">
    <property type="entry name" value="Peptidase_S8_Ser-AS"/>
</dbReference>
<dbReference type="InterPro" id="IPR050131">
    <property type="entry name" value="Peptidase_S8_subtilisin-like"/>
</dbReference>
<dbReference type="InterPro" id="IPR015500">
    <property type="entry name" value="Peptidase_S8_subtilisin-rel"/>
</dbReference>
<dbReference type="InterPro" id="IPR010259">
    <property type="entry name" value="S8pro/Inhibitor_I9"/>
</dbReference>
<dbReference type="PANTHER" id="PTHR43806:SF11">
    <property type="entry name" value="CEREVISIN-RELATED"/>
    <property type="match status" value="1"/>
</dbReference>
<dbReference type="PANTHER" id="PTHR43806">
    <property type="entry name" value="PEPTIDASE S8"/>
    <property type="match status" value="1"/>
</dbReference>
<dbReference type="Pfam" id="PF05922">
    <property type="entry name" value="Inhibitor_I9"/>
    <property type="match status" value="1"/>
</dbReference>
<dbReference type="Pfam" id="PF00082">
    <property type="entry name" value="Peptidase_S8"/>
    <property type="match status" value="1"/>
</dbReference>
<dbReference type="PRINTS" id="PR00723">
    <property type="entry name" value="SUBTILISIN"/>
</dbReference>
<dbReference type="SUPFAM" id="SSF54897">
    <property type="entry name" value="Protease propeptides/inhibitors"/>
    <property type="match status" value="1"/>
</dbReference>
<dbReference type="SUPFAM" id="SSF52743">
    <property type="entry name" value="Subtilisin-like"/>
    <property type="match status" value="1"/>
</dbReference>
<dbReference type="PROSITE" id="PS51892">
    <property type="entry name" value="SUBTILASE"/>
    <property type="match status" value="1"/>
</dbReference>
<dbReference type="PROSITE" id="PS00136">
    <property type="entry name" value="SUBTILASE_ASP"/>
    <property type="match status" value="1"/>
</dbReference>
<dbReference type="PROSITE" id="PS00137">
    <property type="entry name" value="SUBTILASE_HIS"/>
    <property type="match status" value="1"/>
</dbReference>
<dbReference type="PROSITE" id="PS00138">
    <property type="entry name" value="SUBTILASE_SER"/>
    <property type="match status" value="1"/>
</dbReference>
<sequence length="465" mass="50778">MILAIISLSVVICREVSDYIVMFDQDPSMDRASMKVLYNMNIHEAQNILRPDESIGIKMTNGFVARMSESTAERMKRHPSVKMVVKDSPVGISGLKFDVPGSDDRSGIVMQRHAPWGLARVGGSVSLVHGNYCYPINSGKGVDVYVLDTGVEIEHPEFGGRARWGANFVPKSPDRDEHGHGTHCAGVIGGKNFGVTKESSIIAVKVLDKYGSGMTSRLLQGVDFVIKEHEKKKDELYNAAADEYLSSGGSSDIEIEMDGSESFSFVQPETPSIQRLVDAISRKALQPKTVVNLSVGGFRNAALNFAIEYASRLGIHFSTAAGNEHEDACDFSPGSSRAAITTGASTYRDTVAFFSNFGKCVNVFAPGVDILSSWIGGTQKIVSGTSMAAPHTSGAIAAYLTYYDYDPHMLKSRIIGDARLIEDVSEDDYDGTTIWPLPSLFNANKKKLPILSMERLLRRVRNKMR</sequence>
<keyword id="KW-1015">Disulfide bond</keyword>
<keyword id="KW-0378">Hydrolase</keyword>
<keyword id="KW-0645">Protease</keyword>
<keyword id="KW-1185">Reference proteome</keyword>
<keyword id="KW-0964">Secreted</keyword>
<keyword id="KW-0720">Serine protease</keyword>
<keyword id="KW-0732">Signal</keyword>
<keyword id="KW-0749">Sporulation</keyword>
<organism>
    <name type="scientific">Encephalitozoon cuniculi (strain GB-M1)</name>
    <name type="common">Microsporidian parasite</name>
    <dbReference type="NCBI Taxonomy" id="284813"/>
    <lineage>
        <taxon>Eukaryota</taxon>
        <taxon>Fungi</taxon>
        <taxon>Fungi incertae sedis</taxon>
        <taxon>Microsporidia</taxon>
        <taxon>Unikaryonidae</taxon>
        <taxon>Encephalitozoon</taxon>
    </lineage>
</organism>
<gene>
    <name type="primary">SPL1</name>
    <name type="ordered locus">ECU01_1130</name>
</gene>
<name>SPL1_ENCCU</name>
<reference key="1">
    <citation type="journal article" date="2001" name="Genome Res.">
        <title>Sequence and analysis of chromosome I of the amitochondriate intracellular parasite Encephalitozoon cuniculi (Microspora).</title>
        <authorList>
            <person name="Peyret P."/>
            <person name="Katinka M.D."/>
            <person name="Duprat S."/>
            <person name="Duffieux F."/>
            <person name="Barbe V."/>
            <person name="Barbazanges M."/>
            <person name="Weissenbach J."/>
            <person name="Saurin W."/>
            <person name="Vivares C.P."/>
        </authorList>
    </citation>
    <scope>NUCLEOTIDE SEQUENCE [LARGE SCALE GENOMIC DNA]</scope>
    <source>
        <strain>GB-M1</strain>
    </source>
</reference>
<reference key="2">
    <citation type="journal article" date="2001" name="Nature">
        <title>Genome sequence and gene compaction of the eukaryote parasite Encephalitozoon cuniculi.</title>
        <authorList>
            <person name="Katinka M.D."/>
            <person name="Duprat S."/>
            <person name="Cornillot E."/>
            <person name="Metenier G."/>
            <person name="Thomarat F."/>
            <person name="Prensier G."/>
            <person name="Barbe V."/>
            <person name="Peyretaillade E."/>
            <person name="Brottier P."/>
            <person name="Wincker P."/>
            <person name="Delbac F."/>
            <person name="El Alaoui H."/>
            <person name="Peyret P."/>
            <person name="Saurin W."/>
            <person name="Gouy M."/>
            <person name="Weissenbach J."/>
            <person name="Vivares C.P."/>
        </authorList>
    </citation>
    <scope>NUCLEOTIDE SEQUENCE [LARGE SCALE GENOMIC DNA]</scope>
    <source>
        <strain>GB-M1</strain>
    </source>
</reference>
<reference key="3">
    <citation type="journal article" date="2006" name="J. Eukaryot. Microbiol.">
        <title>Identification of novel developmentally regulated genes in Encephalitozoon cuniculi: an endochitinase, a chitin-synthase, and two subtilisin-like proteases are induced during meront-to-sporont differentiation.</title>
        <authorList>
            <person name="Roennebaeumer K."/>
            <person name="Wagener J."/>
            <person name="Gross U."/>
            <person name="Bohne W."/>
        </authorList>
    </citation>
    <scope>DEVELOPMENTAL STAGE</scope>
</reference>
<feature type="signal peptide" evidence="1">
    <location>
        <begin position="1"/>
        <end position="17"/>
    </location>
</feature>
<feature type="chain" id="PRO_0000382936" description="Putative subtilisin-like proteinase 1">
    <location>
        <begin position="18"/>
        <end position="465"/>
    </location>
</feature>
<feature type="domain" description="Inhibitor I9" evidence="1">
    <location>
        <begin position="19"/>
        <end position="90"/>
    </location>
</feature>
<feature type="domain" description="Peptidase S8" evidence="2">
    <location>
        <begin position="115"/>
        <end position="447"/>
    </location>
</feature>
<feature type="active site" description="Charge relay system" evidence="2">
    <location>
        <position position="148"/>
    </location>
</feature>
<feature type="active site" description="Charge relay system" evidence="2">
    <location>
        <position position="180"/>
    </location>
</feature>
<feature type="active site" description="Charge relay system" evidence="2">
    <location>
        <position position="386"/>
    </location>
</feature>
<feature type="disulfide bond" evidence="1">
    <location>
        <begin position="329"/>
        <end position="360"/>
    </location>
</feature>
<proteinExistence type="evidence at transcript level"/>
<accession>Q8SQJ3</accession>
<comment type="function">
    <text>May be involved in the degradation of proteins for nutrient acquisition or possess a regulatory function by proteolytic activation of proproteins.</text>
</comment>
<comment type="subcellular location">
    <subcellularLocation>
        <location evidence="4">Secreted</location>
        <location evidence="4">Extracellular space</location>
    </subcellularLocation>
</comment>
<comment type="developmental stage">
    <text evidence="3">Expression is low in meronts, but becomes induced in sporonts and spores.</text>
</comment>
<comment type="similarity">
    <text evidence="4">Belongs to the peptidase S8 family.</text>
</comment>
<protein>
    <recommendedName>
        <fullName>Putative subtilisin-like proteinase 1</fullName>
        <ecNumber>3.4.21.-</ecNumber>
    </recommendedName>
</protein>